<keyword id="KW-0687">Ribonucleoprotein</keyword>
<keyword id="KW-0689">Ribosomal protein</keyword>
<feature type="chain" id="PRO_1000061000" description="Small ribosomal subunit protein uS9">
    <location>
        <begin position="1"/>
        <end position="130"/>
    </location>
</feature>
<feature type="region of interest" description="Disordered" evidence="2">
    <location>
        <begin position="105"/>
        <end position="130"/>
    </location>
</feature>
<feature type="compositionally biased region" description="Basic residues" evidence="2">
    <location>
        <begin position="111"/>
        <end position="130"/>
    </location>
</feature>
<gene>
    <name evidence="1" type="primary">rpsI</name>
    <name type="ordered locus">BPUM_0137</name>
</gene>
<dbReference type="EMBL" id="CP000813">
    <property type="protein sequence ID" value="ABV60836.1"/>
    <property type="molecule type" value="Genomic_DNA"/>
</dbReference>
<dbReference type="RefSeq" id="WP_003217273.1">
    <property type="nucleotide sequence ID" value="NZ_VEIS01000020.1"/>
</dbReference>
<dbReference type="SMR" id="A8F9B9"/>
<dbReference type="STRING" id="315750.BPUM_0137"/>
<dbReference type="GeneID" id="5619379"/>
<dbReference type="KEGG" id="bpu:BPUM_0137"/>
<dbReference type="eggNOG" id="COG0103">
    <property type="taxonomic scope" value="Bacteria"/>
</dbReference>
<dbReference type="HOGENOM" id="CLU_046483_2_1_9"/>
<dbReference type="OrthoDB" id="9803965at2"/>
<dbReference type="Proteomes" id="UP000001355">
    <property type="component" value="Chromosome"/>
</dbReference>
<dbReference type="GO" id="GO:0022627">
    <property type="term" value="C:cytosolic small ribosomal subunit"/>
    <property type="evidence" value="ECO:0007669"/>
    <property type="project" value="TreeGrafter"/>
</dbReference>
<dbReference type="GO" id="GO:0003723">
    <property type="term" value="F:RNA binding"/>
    <property type="evidence" value="ECO:0007669"/>
    <property type="project" value="TreeGrafter"/>
</dbReference>
<dbReference type="GO" id="GO:0003735">
    <property type="term" value="F:structural constituent of ribosome"/>
    <property type="evidence" value="ECO:0007669"/>
    <property type="project" value="InterPro"/>
</dbReference>
<dbReference type="GO" id="GO:0006412">
    <property type="term" value="P:translation"/>
    <property type="evidence" value="ECO:0007669"/>
    <property type="project" value="UniProtKB-UniRule"/>
</dbReference>
<dbReference type="FunFam" id="3.30.230.10:FF:000001">
    <property type="entry name" value="30S ribosomal protein S9"/>
    <property type="match status" value="1"/>
</dbReference>
<dbReference type="Gene3D" id="3.30.230.10">
    <property type="match status" value="1"/>
</dbReference>
<dbReference type="HAMAP" id="MF_00532_B">
    <property type="entry name" value="Ribosomal_uS9_B"/>
    <property type="match status" value="1"/>
</dbReference>
<dbReference type="InterPro" id="IPR020568">
    <property type="entry name" value="Ribosomal_Su5_D2-typ_SF"/>
</dbReference>
<dbReference type="InterPro" id="IPR000754">
    <property type="entry name" value="Ribosomal_uS9"/>
</dbReference>
<dbReference type="InterPro" id="IPR023035">
    <property type="entry name" value="Ribosomal_uS9_bac/plastid"/>
</dbReference>
<dbReference type="InterPro" id="IPR020574">
    <property type="entry name" value="Ribosomal_uS9_CS"/>
</dbReference>
<dbReference type="InterPro" id="IPR014721">
    <property type="entry name" value="Ribsml_uS5_D2-typ_fold_subgr"/>
</dbReference>
<dbReference type="NCBIfam" id="NF001099">
    <property type="entry name" value="PRK00132.1"/>
    <property type="match status" value="1"/>
</dbReference>
<dbReference type="PANTHER" id="PTHR21569">
    <property type="entry name" value="RIBOSOMAL PROTEIN S9"/>
    <property type="match status" value="1"/>
</dbReference>
<dbReference type="PANTHER" id="PTHR21569:SF1">
    <property type="entry name" value="SMALL RIBOSOMAL SUBUNIT PROTEIN US9M"/>
    <property type="match status" value="1"/>
</dbReference>
<dbReference type="Pfam" id="PF00380">
    <property type="entry name" value="Ribosomal_S9"/>
    <property type="match status" value="1"/>
</dbReference>
<dbReference type="SUPFAM" id="SSF54211">
    <property type="entry name" value="Ribosomal protein S5 domain 2-like"/>
    <property type="match status" value="1"/>
</dbReference>
<dbReference type="PROSITE" id="PS00360">
    <property type="entry name" value="RIBOSOMAL_S9"/>
    <property type="match status" value="1"/>
</dbReference>
<accession>A8F9B9</accession>
<reference key="1">
    <citation type="journal article" date="2007" name="PLoS ONE">
        <title>Paradoxical DNA repair and peroxide resistance gene conservation in Bacillus pumilus SAFR-032.</title>
        <authorList>
            <person name="Gioia J."/>
            <person name="Yerrapragada S."/>
            <person name="Qin X."/>
            <person name="Jiang H."/>
            <person name="Igboeli O.C."/>
            <person name="Muzny D."/>
            <person name="Dugan-Rocha S."/>
            <person name="Ding Y."/>
            <person name="Hawes A."/>
            <person name="Liu W."/>
            <person name="Perez L."/>
            <person name="Kovar C."/>
            <person name="Dinh H."/>
            <person name="Lee S."/>
            <person name="Nazareth L."/>
            <person name="Blyth P."/>
            <person name="Holder M."/>
            <person name="Buhay C."/>
            <person name="Tirumalai M.R."/>
            <person name="Liu Y."/>
            <person name="Dasgupta I."/>
            <person name="Bokhetache L."/>
            <person name="Fujita M."/>
            <person name="Karouia F."/>
            <person name="Eswara Moorthy P."/>
            <person name="Siefert J."/>
            <person name="Uzman A."/>
            <person name="Buzumbo P."/>
            <person name="Verma A."/>
            <person name="Zwiya H."/>
            <person name="McWilliams B.D."/>
            <person name="Olowu A."/>
            <person name="Clinkenbeard K.D."/>
            <person name="Newcombe D."/>
            <person name="Golebiewski L."/>
            <person name="Petrosino J.F."/>
            <person name="Nicholson W.L."/>
            <person name="Fox G.E."/>
            <person name="Venkateswaran K."/>
            <person name="Highlander S.K."/>
            <person name="Weinstock G.M."/>
        </authorList>
    </citation>
    <scope>NUCLEOTIDE SEQUENCE [LARGE SCALE GENOMIC DNA]</scope>
    <source>
        <strain>SAFR-032</strain>
    </source>
</reference>
<comment type="similarity">
    <text evidence="1">Belongs to the universal ribosomal protein uS9 family.</text>
</comment>
<evidence type="ECO:0000255" key="1">
    <source>
        <dbReference type="HAMAP-Rule" id="MF_00532"/>
    </source>
</evidence>
<evidence type="ECO:0000256" key="2">
    <source>
        <dbReference type="SAM" id="MobiDB-lite"/>
    </source>
</evidence>
<evidence type="ECO:0000305" key="3"/>
<organism>
    <name type="scientific">Bacillus pumilus (strain SAFR-032)</name>
    <dbReference type="NCBI Taxonomy" id="315750"/>
    <lineage>
        <taxon>Bacteria</taxon>
        <taxon>Bacillati</taxon>
        <taxon>Bacillota</taxon>
        <taxon>Bacilli</taxon>
        <taxon>Bacillales</taxon>
        <taxon>Bacillaceae</taxon>
        <taxon>Bacillus</taxon>
    </lineage>
</organism>
<proteinExistence type="inferred from homology"/>
<name>RS9_BACP2</name>
<sequence length="130" mass="14528">MAQVQYYGTGRRKSSVARVRLVPGEGRIVVNNREITEYIPFAALIEDVKQPLNITETANSYDVLVTVHGGGFSGQAGAIRHGISRALLEVDPEYRTSLKRAGLLTRDPRMKERKKYGLKGARRAPQFSKR</sequence>
<protein>
    <recommendedName>
        <fullName evidence="1">Small ribosomal subunit protein uS9</fullName>
    </recommendedName>
    <alternativeName>
        <fullName evidence="3">30S ribosomal protein S9</fullName>
    </alternativeName>
</protein>